<organism>
    <name type="scientific">Psychrobacter cryohalolentis (strain ATCC BAA-1226 / DSM 17306 / VKM B-2378 / K5)</name>
    <dbReference type="NCBI Taxonomy" id="335284"/>
    <lineage>
        <taxon>Bacteria</taxon>
        <taxon>Pseudomonadati</taxon>
        <taxon>Pseudomonadota</taxon>
        <taxon>Gammaproteobacteria</taxon>
        <taxon>Moraxellales</taxon>
        <taxon>Moraxellaceae</taxon>
        <taxon>Psychrobacter</taxon>
    </lineage>
</organism>
<dbReference type="EC" id="7.1.1.-" evidence="1"/>
<dbReference type="EMBL" id="CP000323">
    <property type="protein sequence ID" value="ABE74357.1"/>
    <property type="molecule type" value="Genomic_DNA"/>
</dbReference>
<dbReference type="RefSeq" id="WP_011512925.1">
    <property type="nucleotide sequence ID" value="NC_007969.1"/>
</dbReference>
<dbReference type="SMR" id="Q1QD96"/>
<dbReference type="STRING" id="335284.Pcryo_0574"/>
<dbReference type="KEGG" id="pcr:Pcryo_0574"/>
<dbReference type="eggNOG" id="COG0377">
    <property type="taxonomic scope" value="Bacteria"/>
</dbReference>
<dbReference type="HOGENOM" id="CLU_055737_7_3_6"/>
<dbReference type="Proteomes" id="UP000002425">
    <property type="component" value="Chromosome"/>
</dbReference>
<dbReference type="GO" id="GO:0005886">
    <property type="term" value="C:plasma membrane"/>
    <property type="evidence" value="ECO:0007669"/>
    <property type="project" value="UniProtKB-SubCell"/>
</dbReference>
<dbReference type="GO" id="GO:0045271">
    <property type="term" value="C:respiratory chain complex I"/>
    <property type="evidence" value="ECO:0007669"/>
    <property type="project" value="TreeGrafter"/>
</dbReference>
<dbReference type="GO" id="GO:0051539">
    <property type="term" value="F:4 iron, 4 sulfur cluster binding"/>
    <property type="evidence" value="ECO:0007669"/>
    <property type="project" value="UniProtKB-KW"/>
</dbReference>
<dbReference type="GO" id="GO:0005506">
    <property type="term" value="F:iron ion binding"/>
    <property type="evidence" value="ECO:0007669"/>
    <property type="project" value="UniProtKB-UniRule"/>
</dbReference>
<dbReference type="GO" id="GO:0008137">
    <property type="term" value="F:NADH dehydrogenase (ubiquinone) activity"/>
    <property type="evidence" value="ECO:0007669"/>
    <property type="project" value="InterPro"/>
</dbReference>
<dbReference type="GO" id="GO:0050136">
    <property type="term" value="F:NADH:ubiquinone reductase (non-electrogenic) activity"/>
    <property type="evidence" value="ECO:0007669"/>
    <property type="project" value="UniProtKB-UniRule"/>
</dbReference>
<dbReference type="GO" id="GO:0048038">
    <property type="term" value="F:quinone binding"/>
    <property type="evidence" value="ECO:0007669"/>
    <property type="project" value="UniProtKB-KW"/>
</dbReference>
<dbReference type="GO" id="GO:0009060">
    <property type="term" value="P:aerobic respiration"/>
    <property type="evidence" value="ECO:0007669"/>
    <property type="project" value="TreeGrafter"/>
</dbReference>
<dbReference type="GO" id="GO:0015990">
    <property type="term" value="P:electron transport coupled proton transport"/>
    <property type="evidence" value="ECO:0007669"/>
    <property type="project" value="TreeGrafter"/>
</dbReference>
<dbReference type="FunFam" id="3.40.50.12280:FF:000002">
    <property type="entry name" value="NADH-quinone oxidoreductase subunit B"/>
    <property type="match status" value="1"/>
</dbReference>
<dbReference type="Gene3D" id="3.40.50.12280">
    <property type="match status" value="1"/>
</dbReference>
<dbReference type="HAMAP" id="MF_01356">
    <property type="entry name" value="NDH1_NuoB"/>
    <property type="match status" value="1"/>
</dbReference>
<dbReference type="InterPro" id="IPR006137">
    <property type="entry name" value="NADH_UbQ_OxRdtase-like_20kDa"/>
</dbReference>
<dbReference type="InterPro" id="IPR006138">
    <property type="entry name" value="NADH_UQ_OxRdtase_20Kd_su"/>
</dbReference>
<dbReference type="NCBIfam" id="TIGR01957">
    <property type="entry name" value="nuoB_fam"/>
    <property type="match status" value="1"/>
</dbReference>
<dbReference type="NCBIfam" id="NF005012">
    <property type="entry name" value="PRK06411.1"/>
    <property type="match status" value="1"/>
</dbReference>
<dbReference type="PANTHER" id="PTHR11995">
    <property type="entry name" value="NADH DEHYDROGENASE"/>
    <property type="match status" value="1"/>
</dbReference>
<dbReference type="PANTHER" id="PTHR11995:SF14">
    <property type="entry name" value="NADH DEHYDROGENASE [UBIQUINONE] IRON-SULFUR PROTEIN 7, MITOCHONDRIAL"/>
    <property type="match status" value="1"/>
</dbReference>
<dbReference type="Pfam" id="PF01058">
    <property type="entry name" value="Oxidored_q6"/>
    <property type="match status" value="1"/>
</dbReference>
<dbReference type="SUPFAM" id="SSF56770">
    <property type="entry name" value="HydA/Nqo6-like"/>
    <property type="match status" value="1"/>
</dbReference>
<dbReference type="PROSITE" id="PS01150">
    <property type="entry name" value="COMPLEX1_20K"/>
    <property type="match status" value="1"/>
</dbReference>
<proteinExistence type="inferred from homology"/>
<comment type="function">
    <text evidence="1">NDH-1 shuttles electrons from NADH, via FMN and iron-sulfur (Fe-S) centers, to quinones in the respiratory chain. The immediate electron acceptor for the enzyme in this species is believed to be ubiquinone. Couples the redox reaction to proton translocation (for every two electrons transferred, four hydrogen ions are translocated across the cytoplasmic membrane), and thus conserves the redox energy in a proton gradient.</text>
</comment>
<comment type="catalytic activity">
    <reaction evidence="1">
        <text>a quinone + NADH + 5 H(+)(in) = a quinol + NAD(+) + 4 H(+)(out)</text>
        <dbReference type="Rhea" id="RHEA:57888"/>
        <dbReference type="ChEBI" id="CHEBI:15378"/>
        <dbReference type="ChEBI" id="CHEBI:24646"/>
        <dbReference type="ChEBI" id="CHEBI:57540"/>
        <dbReference type="ChEBI" id="CHEBI:57945"/>
        <dbReference type="ChEBI" id="CHEBI:132124"/>
    </reaction>
</comment>
<comment type="cofactor">
    <cofactor evidence="1">
        <name>[4Fe-4S] cluster</name>
        <dbReference type="ChEBI" id="CHEBI:49883"/>
    </cofactor>
    <text evidence="1">Binds 1 [4Fe-4S] cluster.</text>
</comment>
<comment type="subunit">
    <text evidence="1">NDH-1 is composed of 14 different subunits. Subunits NuoB, C, D, E, F, and G constitute the peripheral sector of the complex.</text>
</comment>
<comment type="subcellular location">
    <subcellularLocation>
        <location evidence="1">Cell inner membrane</location>
        <topology evidence="1">Peripheral membrane protein</topology>
        <orientation evidence="1">Cytoplasmic side</orientation>
    </subcellularLocation>
</comment>
<comment type="similarity">
    <text evidence="1">Belongs to the complex I 20 kDa subunit family.</text>
</comment>
<keyword id="KW-0004">4Fe-4S</keyword>
<keyword id="KW-0997">Cell inner membrane</keyword>
<keyword id="KW-1003">Cell membrane</keyword>
<keyword id="KW-0408">Iron</keyword>
<keyword id="KW-0411">Iron-sulfur</keyword>
<keyword id="KW-0472">Membrane</keyword>
<keyword id="KW-0479">Metal-binding</keyword>
<keyword id="KW-0520">NAD</keyword>
<keyword id="KW-0874">Quinone</keyword>
<keyword id="KW-1278">Translocase</keyword>
<keyword id="KW-0813">Transport</keyword>
<keyword id="KW-0830">Ubiquinone</keyword>
<name>NUOB_PSYCK</name>
<feature type="chain" id="PRO_0000376322" description="NADH-quinone oxidoreductase subunit B">
    <location>
        <begin position="1"/>
        <end position="222"/>
    </location>
</feature>
<feature type="region of interest" description="Disordered" evidence="2">
    <location>
        <begin position="198"/>
        <end position="222"/>
    </location>
</feature>
<feature type="compositionally biased region" description="Basic and acidic residues" evidence="2">
    <location>
        <begin position="201"/>
        <end position="212"/>
    </location>
</feature>
<feature type="binding site" evidence="1">
    <location>
        <position position="65"/>
    </location>
    <ligand>
        <name>[4Fe-4S] cluster</name>
        <dbReference type="ChEBI" id="CHEBI:49883"/>
    </ligand>
</feature>
<feature type="binding site" evidence="1">
    <location>
        <position position="66"/>
    </location>
    <ligand>
        <name>[4Fe-4S] cluster</name>
        <dbReference type="ChEBI" id="CHEBI:49883"/>
    </ligand>
</feature>
<feature type="binding site" evidence="1">
    <location>
        <position position="131"/>
    </location>
    <ligand>
        <name>[4Fe-4S] cluster</name>
        <dbReference type="ChEBI" id="CHEBI:49883"/>
    </ligand>
</feature>
<feature type="binding site" evidence="1">
    <location>
        <position position="160"/>
    </location>
    <ligand>
        <name>[4Fe-4S] cluster</name>
        <dbReference type="ChEBI" id="CHEBI:49883"/>
    </ligand>
</feature>
<sequence>MKYTLTKANPDADVYPAQTSQTVNDPMEDEVNKNVFMGRLEDLVHSTANWGRKHSLWPFNFGTSCCYVEYATTLTAVHDLSRFGAEVIRASPRQADVMIVAGTCFVKMAPVIQRLYEQMLEPKWVISMGACANSGGMYDIYSVVQGVDKIIPVDVYVPGCPPRPEALIQGLMLLQESITKERRPLGIHVNDQGVYQPQMTPERDRKQADRIAVKNLRSPDSI</sequence>
<evidence type="ECO:0000255" key="1">
    <source>
        <dbReference type="HAMAP-Rule" id="MF_01356"/>
    </source>
</evidence>
<evidence type="ECO:0000256" key="2">
    <source>
        <dbReference type="SAM" id="MobiDB-lite"/>
    </source>
</evidence>
<accession>Q1QD96</accession>
<gene>
    <name evidence="1" type="primary">nuoB</name>
    <name type="ordered locus">Pcryo_0574</name>
</gene>
<reference key="1">
    <citation type="submission" date="2006-03" db="EMBL/GenBank/DDBJ databases">
        <title>Complete sequence of chromosome of Psychrobacter cryohalolentis K5.</title>
        <authorList>
            <consortium name="US DOE Joint Genome Institute"/>
            <person name="Copeland A."/>
            <person name="Lucas S."/>
            <person name="Lapidus A."/>
            <person name="Barry K."/>
            <person name="Detter J.C."/>
            <person name="Glavina T."/>
            <person name="Hammon N."/>
            <person name="Israni S."/>
            <person name="Dalin E."/>
            <person name="Tice H."/>
            <person name="Pitluck S."/>
            <person name="Brettin T."/>
            <person name="Bruce D."/>
            <person name="Han C."/>
            <person name="Tapia R."/>
            <person name="Sims D.R."/>
            <person name="Gilna P."/>
            <person name="Schmutz J."/>
            <person name="Larimer F."/>
            <person name="Land M."/>
            <person name="Hauser L."/>
            <person name="Kyrpides N."/>
            <person name="Kim E."/>
            <person name="Richardson P."/>
        </authorList>
    </citation>
    <scope>NUCLEOTIDE SEQUENCE [LARGE SCALE GENOMIC DNA]</scope>
    <source>
        <strain>ATCC BAA-1226 / DSM 17306 / VKM B-2378 / K5</strain>
    </source>
</reference>
<protein>
    <recommendedName>
        <fullName evidence="1">NADH-quinone oxidoreductase subunit B</fullName>
        <ecNumber evidence="1">7.1.1.-</ecNumber>
    </recommendedName>
    <alternativeName>
        <fullName evidence="1">NADH dehydrogenase I subunit B</fullName>
    </alternativeName>
    <alternativeName>
        <fullName evidence="1">NDH-1 subunit B</fullName>
    </alternativeName>
</protein>